<keyword id="KW-0067">ATP-binding</keyword>
<keyword id="KW-0963">Cytoplasm</keyword>
<keyword id="KW-0324">Glycolysis</keyword>
<keyword id="KW-0418">Kinase</keyword>
<keyword id="KW-0547">Nucleotide-binding</keyword>
<keyword id="KW-0597">Phosphoprotein</keyword>
<keyword id="KW-0808">Transferase</keyword>
<comment type="catalytic activity">
    <reaction evidence="1">
        <text>(2R)-3-phosphoglycerate + ATP = (2R)-3-phospho-glyceroyl phosphate + ADP</text>
        <dbReference type="Rhea" id="RHEA:14801"/>
        <dbReference type="ChEBI" id="CHEBI:30616"/>
        <dbReference type="ChEBI" id="CHEBI:57604"/>
        <dbReference type="ChEBI" id="CHEBI:58272"/>
        <dbReference type="ChEBI" id="CHEBI:456216"/>
        <dbReference type="EC" id="2.7.2.3"/>
    </reaction>
</comment>
<comment type="pathway">
    <text evidence="1">Carbohydrate degradation; glycolysis; pyruvate from D-glyceraldehyde 3-phosphate: step 2/5.</text>
</comment>
<comment type="subunit">
    <text evidence="1">Monomer.</text>
</comment>
<comment type="subcellular location">
    <subcellularLocation>
        <location evidence="1">Cytoplasm</location>
    </subcellularLocation>
</comment>
<comment type="similarity">
    <text evidence="1">Belongs to the phosphoglycerate kinase family.</text>
</comment>
<protein>
    <recommendedName>
        <fullName evidence="1">Phosphoglycerate kinase</fullName>
        <ecNumber evidence="1">2.7.2.3</ecNumber>
    </recommendedName>
</protein>
<accession>B7HED5</accession>
<reference key="1">
    <citation type="submission" date="2008-10" db="EMBL/GenBank/DDBJ databases">
        <title>Genome sequence of Bacillus cereus B4264.</title>
        <authorList>
            <person name="Dodson R.J."/>
            <person name="Durkin A.S."/>
            <person name="Rosovitz M.J."/>
            <person name="Rasko D.A."/>
            <person name="Hoffmaster A."/>
            <person name="Ravel J."/>
            <person name="Sutton G."/>
        </authorList>
    </citation>
    <scope>NUCLEOTIDE SEQUENCE [LARGE SCALE GENOMIC DNA]</scope>
    <source>
        <strain>B4264</strain>
    </source>
</reference>
<gene>
    <name evidence="1" type="primary">pgk</name>
    <name type="ordered locus">BCB4264_A5252</name>
</gene>
<feature type="chain" id="PRO_1000192799" description="Phosphoglycerate kinase">
    <location>
        <begin position="1"/>
        <end position="394"/>
    </location>
</feature>
<feature type="binding site" evidence="1">
    <location>
        <begin position="21"/>
        <end position="23"/>
    </location>
    <ligand>
        <name>substrate</name>
    </ligand>
</feature>
<feature type="binding site" evidence="1">
    <location>
        <position position="36"/>
    </location>
    <ligand>
        <name>substrate</name>
    </ligand>
</feature>
<feature type="binding site" evidence="1">
    <location>
        <begin position="59"/>
        <end position="62"/>
    </location>
    <ligand>
        <name>substrate</name>
    </ligand>
</feature>
<feature type="binding site" evidence="1">
    <location>
        <position position="118"/>
    </location>
    <ligand>
        <name>substrate</name>
    </ligand>
</feature>
<feature type="binding site" evidence="1">
    <location>
        <position position="151"/>
    </location>
    <ligand>
        <name>substrate</name>
    </ligand>
</feature>
<feature type="binding site" evidence="1">
    <location>
        <position position="201"/>
    </location>
    <ligand>
        <name>ATP</name>
        <dbReference type="ChEBI" id="CHEBI:30616"/>
    </ligand>
</feature>
<feature type="binding site" evidence="1">
    <location>
        <position position="292"/>
    </location>
    <ligand>
        <name>ATP</name>
        <dbReference type="ChEBI" id="CHEBI:30616"/>
    </ligand>
</feature>
<feature type="binding site" evidence="1">
    <location>
        <position position="323"/>
    </location>
    <ligand>
        <name>ATP</name>
        <dbReference type="ChEBI" id="CHEBI:30616"/>
    </ligand>
</feature>
<feature type="binding site" evidence="1">
    <location>
        <begin position="350"/>
        <end position="353"/>
    </location>
    <ligand>
        <name>ATP</name>
        <dbReference type="ChEBI" id="CHEBI:30616"/>
    </ligand>
</feature>
<feature type="modified residue" description="Phosphoserine" evidence="1">
    <location>
        <position position="183"/>
    </location>
</feature>
<feature type="modified residue" description="Phosphothreonine" evidence="1">
    <location>
        <position position="299"/>
    </location>
</feature>
<evidence type="ECO:0000255" key="1">
    <source>
        <dbReference type="HAMAP-Rule" id="MF_00145"/>
    </source>
</evidence>
<name>PGK_BACC4</name>
<dbReference type="EC" id="2.7.2.3" evidence="1"/>
<dbReference type="EMBL" id="CP001176">
    <property type="protein sequence ID" value="ACK60993.1"/>
    <property type="molecule type" value="Genomic_DNA"/>
</dbReference>
<dbReference type="RefSeq" id="WP_001036350.1">
    <property type="nucleotide sequence ID" value="NZ_VEHB01000004.1"/>
</dbReference>
<dbReference type="KEGG" id="bcb:BCB4264_A5252"/>
<dbReference type="HOGENOM" id="CLU_025427_0_2_9"/>
<dbReference type="UniPathway" id="UPA00109">
    <property type="reaction ID" value="UER00185"/>
</dbReference>
<dbReference type="Proteomes" id="UP000007096">
    <property type="component" value="Chromosome"/>
</dbReference>
<dbReference type="GO" id="GO:0005829">
    <property type="term" value="C:cytosol"/>
    <property type="evidence" value="ECO:0007669"/>
    <property type="project" value="TreeGrafter"/>
</dbReference>
<dbReference type="GO" id="GO:0043531">
    <property type="term" value="F:ADP binding"/>
    <property type="evidence" value="ECO:0007669"/>
    <property type="project" value="TreeGrafter"/>
</dbReference>
<dbReference type="GO" id="GO:0005524">
    <property type="term" value="F:ATP binding"/>
    <property type="evidence" value="ECO:0007669"/>
    <property type="project" value="UniProtKB-KW"/>
</dbReference>
<dbReference type="GO" id="GO:0004618">
    <property type="term" value="F:phosphoglycerate kinase activity"/>
    <property type="evidence" value="ECO:0007669"/>
    <property type="project" value="UniProtKB-UniRule"/>
</dbReference>
<dbReference type="GO" id="GO:0006094">
    <property type="term" value="P:gluconeogenesis"/>
    <property type="evidence" value="ECO:0007669"/>
    <property type="project" value="TreeGrafter"/>
</dbReference>
<dbReference type="GO" id="GO:0006096">
    <property type="term" value="P:glycolytic process"/>
    <property type="evidence" value="ECO:0007669"/>
    <property type="project" value="UniProtKB-UniRule"/>
</dbReference>
<dbReference type="CDD" id="cd00318">
    <property type="entry name" value="Phosphoglycerate_kinase"/>
    <property type="match status" value="1"/>
</dbReference>
<dbReference type="FunFam" id="3.40.50.1260:FF:000001">
    <property type="entry name" value="Phosphoglycerate kinase"/>
    <property type="match status" value="1"/>
</dbReference>
<dbReference type="FunFam" id="3.40.50.1260:FF:000002">
    <property type="entry name" value="Phosphoglycerate kinase"/>
    <property type="match status" value="1"/>
</dbReference>
<dbReference type="Gene3D" id="3.40.50.1260">
    <property type="entry name" value="Phosphoglycerate kinase, N-terminal domain"/>
    <property type="match status" value="2"/>
</dbReference>
<dbReference type="HAMAP" id="MF_00145">
    <property type="entry name" value="Phosphoglyc_kinase"/>
    <property type="match status" value="1"/>
</dbReference>
<dbReference type="InterPro" id="IPR001576">
    <property type="entry name" value="Phosphoglycerate_kinase"/>
</dbReference>
<dbReference type="InterPro" id="IPR015911">
    <property type="entry name" value="Phosphoglycerate_kinase_CS"/>
</dbReference>
<dbReference type="InterPro" id="IPR015824">
    <property type="entry name" value="Phosphoglycerate_kinase_N"/>
</dbReference>
<dbReference type="InterPro" id="IPR036043">
    <property type="entry name" value="Phosphoglycerate_kinase_sf"/>
</dbReference>
<dbReference type="PANTHER" id="PTHR11406">
    <property type="entry name" value="PHOSPHOGLYCERATE KINASE"/>
    <property type="match status" value="1"/>
</dbReference>
<dbReference type="PANTHER" id="PTHR11406:SF23">
    <property type="entry name" value="PHOSPHOGLYCERATE KINASE 1, CHLOROPLASTIC-RELATED"/>
    <property type="match status" value="1"/>
</dbReference>
<dbReference type="Pfam" id="PF00162">
    <property type="entry name" value="PGK"/>
    <property type="match status" value="1"/>
</dbReference>
<dbReference type="PIRSF" id="PIRSF000724">
    <property type="entry name" value="Pgk"/>
    <property type="match status" value="1"/>
</dbReference>
<dbReference type="PRINTS" id="PR00477">
    <property type="entry name" value="PHGLYCKINASE"/>
</dbReference>
<dbReference type="SUPFAM" id="SSF53748">
    <property type="entry name" value="Phosphoglycerate kinase"/>
    <property type="match status" value="1"/>
</dbReference>
<dbReference type="PROSITE" id="PS00111">
    <property type="entry name" value="PGLYCERATE_KINASE"/>
    <property type="match status" value="1"/>
</dbReference>
<organism>
    <name type="scientific">Bacillus cereus (strain B4264)</name>
    <dbReference type="NCBI Taxonomy" id="405532"/>
    <lineage>
        <taxon>Bacteria</taxon>
        <taxon>Bacillati</taxon>
        <taxon>Bacillota</taxon>
        <taxon>Bacilli</taxon>
        <taxon>Bacillales</taxon>
        <taxon>Bacillaceae</taxon>
        <taxon>Bacillus</taxon>
        <taxon>Bacillus cereus group</taxon>
    </lineage>
</organism>
<sequence>MNKKSIRDVDLKGKRVFCRVDFNVPMKEGKITDETRIRAALPTIQYLVEQGAKVILASHLGRPKGQVVEEMRLTPVAARLGELLGKDVKKADEAFGPVAQEMVAAMNEGDVLVLENVRFYAGEEKNDAELAKEFAALADIFVNDAFGAAHRAHASTAGIADYLPAVSGLLMEKELDVLGKALSNPERPFTAIIGGAKVKDKIGVIRHLLDKVDNLIIGGGLAYTFVKALGHEIGLSLCEDDKIELAKEFMQLAKEKGVNFYMPVDVVITEEFSETATTKIVGIDSIPSNWEGVDIGPKTREIYADVIKNSKLVVWNGPMGVFEMTPFAEGTKAVGQALADAEDTYSVIGGGDSAAAVEKFGMADKMSHISTGGGASLEFMEGKELPGVVCLNDK</sequence>
<proteinExistence type="inferred from homology"/>